<accession>Q9WTT4</accession>
<evidence type="ECO:0000250" key="1">
    <source>
        <dbReference type="UniProtKB" id="O75348"/>
    </source>
</evidence>
<evidence type="ECO:0000250" key="2">
    <source>
        <dbReference type="UniProtKB" id="O95670"/>
    </source>
</evidence>
<evidence type="ECO:0000250" key="3">
    <source>
        <dbReference type="UniProtKB" id="Q0VCV6"/>
    </source>
</evidence>
<evidence type="ECO:0000256" key="4">
    <source>
        <dbReference type="SAM" id="MobiDB-lite"/>
    </source>
</evidence>
<evidence type="ECO:0000305" key="5"/>
<proteinExistence type="evidence at protein level"/>
<sequence>MASQTQGIQQLLQAEKRAAEKVADARKRKARRLKQAKEEAQMEVEQYRREREQEFQSKQQAAMGSQGNLSAEVEQATRRQVQGMQSSQQRNRERVLAQLLGMVCEVRPQVHPNYRVTV</sequence>
<feature type="chain" id="PRO_0000192902" description="V-type proton ATPase subunit G 2">
    <location>
        <begin position="1"/>
        <end position="118"/>
    </location>
</feature>
<feature type="region of interest" description="Disordered" evidence="4">
    <location>
        <begin position="23"/>
        <end position="91"/>
    </location>
</feature>
<feature type="compositionally biased region" description="Basic and acidic residues" evidence="4">
    <location>
        <begin position="35"/>
        <end position="55"/>
    </location>
</feature>
<feature type="compositionally biased region" description="Polar residues" evidence="4">
    <location>
        <begin position="56"/>
        <end position="69"/>
    </location>
</feature>
<feature type="compositionally biased region" description="Polar residues" evidence="4">
    <location>
        <begin position="78"/>
        <end position="89"/>
    </location>
</feature>
<keyword id="KW-0002">3D-structure</keyword>
<keyword id="KW-0968">Cytoplasmic vesicle</keyword>
<keyword id="KW-0375">Hydrogen ion transport</keyword>
<keyword id="KW-0406">Ion transport</keyword>
<keyword id="KW-0472">Membrane</keyword>
<keyword id="KW-1185">Reference proteome</keyword>
<keyword id="KW-0813">Transport</keyword>
<organism>
    <name type="scientific">Mus musculus</name>
    <name type="common">Mouse</name>
    <dbReference type="NCBI Taxonomy" id="10090"/>
    <lineage>
        <taxon>Eukaryota</taxon>
        <taxon>Metazoa</taxon>
        <taxon>Chordata</taxon>
        <taxon>Craniata</taxon>
        <taxon>Vertebrata</taxon>
        <taxon>Euteleostomi</taxon>
        <taxon>Mammalia</taxon>
        <taxon>Eutheria</taxon>
        <taxon>Euarchontoglires</taxon>
        <taxon>Glires</taxon>
        <taxon>Rodentia</taxon>
        <taxon>Myomorpha</taxon>
        <taxon>Muroidea</taxon>
        <taxon>Muridae</taxon>
        <taxon>Murinae</taxon>
        <taxon>Mus</taxon>
        <taxon>Mus</taxon>
    </lineage>
</organism>
<gene>
    <name type="primary">Atp6v1g2</name>
    <name type="synonym">Atp6g2</name>
    <name type="synonym">Ng38</name>
</gene>
<protein>
    <recommendedName>
        <fullName>V-type proton ATPase subunit G 2</fullName>
        <shortName>V-ATPase subunit G 2</shortName>
    </recommendedName>
    <alternativeName>
        <fullName>V-ATPase 13 kDa subunit 2</fullName>
    </alternativeName>
    <alternativeName>
        <fullName>Vacuolar proton pump subunit G 2</fullName>
    </alternativeName>
</protein>
<dbReference type="EMBL" id="AC007080">
    <property type="protein sequence ID" value="AAD30176.1"/>
    <property type="molecule type" value="Genomic_DNA"/>
</dbReference>
<dbReference type="EMBL" id="AK011945">
    <property type="protein sequence ID" value="BAB27931.1"/>
    <property type="molecule type" value="mRNA"/>
</dbReference>
<dbReference type="EMBL" id="BC020190">
    <property type="protein sequence ID" value="AAH20190.1"/>
    <property type="molecule type" value="mRNA"/>
</dbReference>
<dbReference type="EMBL" id="BC062380">
    <property type="protein sequence ID" value="AAH62380.1"/>
    <property type="molecule type" value="mRNA"/>
</dbReference>
<dbReference type="CCDS" id="CCDS37597.1"/>
<dbReference type="RefSeq" id="NP_001334280.1">
    <property type="nucleotide sequence ID" value="NM_001347351.1"/>
</dbReference>
<dbReference type="RefSeq" id="NP_075668.1">
    <property type="nucleotide sequence ID" value="NM_023179.3"/>
</dbReference>
<dbReference type="PDB" id="9BRA">
    <property type="method" value="EM"/>
    <property type="resolution" value="4.30 A"/>
    <property type="chains" value="R/T/V=1-118"/>
</dbReference>
<dbReference type="PDB" id="9BRQ">
    <property type="method" value="EM"/>
    <property type="resolution" value="4.30 A"/>
    <property type="chains" value="R/T/V=1-118"/>
</dbReference>
<dbReference type="PDB" id="9BRR">
    <property type="method" value="EM"/>
    <property type="resolution" value="4.50 A"/>
    <property type="chains" value="R/T/V=1-118"/>
</dbReference>
<dbReference type="PDB" id="9BRS">
    <property type="method" value="EM"/>
    <property type="resolution" value="4.40 A"/>
    <property type="chains" value="R/T/V=1-118"/>
</dbReference>
<dbReference type="PDB" id="9BRT">
    <property type="method" value="EM"/>
    <property type="resolution" value="4.30 A"/>
    <property type="chains" value="R/T/V=1-118"/>
</dbReference>
<dbReference type="PDB" id="9BRU">
    <property type="method" value="EM"/>
    <property type="resolution" value="4.40 A"/>
    <property type="chains" value="R/T/V=1-118"/>
</dbReference>
<dbReference type="PDBsum" id="9BRA"/>
<dbReference type="PDBsum" id="9BRQ"/>
<dbReference type="PDBsum" id="9BRR"/>
<dbReference type="PDBsum" id="9BRS"/>
<dbReference type="PDBsum" id="9BRT"/>
<dbReference type="PDBsum" id="9BRU"/>
<dbReference type="EMDB" id="EMD-44839"/>
<dbReference type="EMDB" id="EMD-44840"/>
<dbReference type="EMDB" id="EMD-44841"/>
<dbReference type="EMDB" id="EMD-44842"/>
<dbReference type="EMDB" id="EMD-44843"/>
<dbReference type="EMDB" id="EMD-44844"/>
<dbReference type="SMR" id="Q9WTT4"/>
<dbReference type="BioGRID" id="211318">
    <property type="interactions" value="9"/>
</dbReference>
<dbReference type="FunCoup" id="Q9WTT4">
    <property type="interactions" value="847"/>
</dbReference>
<dbReference type="IntAct" id="Q9WTT4">
    <property type="interactions" value="2"/>
</dbReference>
<dbReference type="MINT" id="Q9WTT4"/>
<dbReference type="STRING" id="10090.ENSMUSP00000069482"/>
<dbReference type="TCDB" id="3.A.2.2.6">
    <property type="family name" value="the h+- or na+-translocating f-type, v-type and a-type atpase (f-atpase) superfamily"/>
</dbReference>
<dbReference type="GlyGen" id="Q9WTT4">
    <property type="glycosylation" value="1 site, 1 N-linked glycan (1 site)"/>
</dbReference>
<dbReference type="iPTMnet" id="Q9WTT4"/>
<dbReference type="PhosphoSitePlus" id="Q9WTT4"/>
<dbReference type="SwissPalm" id="Q9WTT4"/>
<dbReference type="PaxDb" id="10090-ENSMUSP00000069482"/>
<dbReference type="ProteomicsDB" id="300194"/>
<dbReference type="DNASU" id="66237"/>
<dbReference type="Ensembl" id="ENSMUST00000068261.9">
    <property type="protein sequence ID" value="ENSMUSP00000069482.9"/>
    <property type="gene ID" value="ENSMUSG00000024403.17"/>
</dbReference>
<dbReference type="GeneID" id="66237"/>
<dbReference type="KEGG" id="mmu:66237"/>
<dbReference type="UCSC" id="uc008cgy.2">
    <property type="organism name" value="mouse"/>
</dbReference>
<dbReference type="AGR" id="MGI:1913487"/>
<dbReference type="CTD" id="534"/>
<dbReference type="MGI" id="MGI:1913487">
    <property type="gene designation" value="Atp6v1g2"/>
</dbReference>
<dbReference type="VEuPathDB" id="HostDB:ENSMUSG00000024403"/>
<dbReference type="eggNOG" id="KOG1772">
    <property type="taxonomic scope" value="Eukaryota"/>
</dbReference>
<dbReference type="GeneTree" id="ENSGT00940000161280"/>
<dbReference type="HOGENOM" id="CLU_125101_1_1_1"/>
<dbReference type="InParanoid" id="Q9WTT4"/>
<dbReference type="OMA" id="EHMGSKD"/>
<dbReference type="OrthoDB" id="91703at9989"/>
<dbReference type="PhylomeDB" id="Q9WTT4"/>
<dbReference type="TreeFam" id="TF313777"/>
<dbReference type="Reactome" id="R-MMU-1222556">
    <property type="pathway name" value="ROS and RNS production in phagocytes"/>
</dbReference>
<dbReference type="Reactome" id="R-MMU-77387">
    <property type="pathway name" value="Insulin receptor recycling"/>
</dbReference>
<dbReference type="Reactome" id="R-MMU-917977">
    <property type="pathway name" value="Transferrin endocytosis and recycling"/>
</dbReference>
<dbReference type="Reactome" id="R-MMU-9639288">
    <property type="pathway name" value="Amino acids regulate mTORC1"/>
</dbReference>
<dbReference type="Reactome" id="R-MMU-983712">
    <property type="pathway name" value="Ion channel transport"/>
</dbReference>
<dbReference type="BioGRID-ORCS" id="66237">
    <property type="hits" value="2 hits in 76 CRISPR screens"/>
</dbReference>
<dbReference type="CD-CODE" id="CE726F99">
    <property type="entry name" value="Postsynaptic density"/>
</dbReference>
<dbReference type="ChiTaRS" id="Atp6v1g2">
    <property type="organism name" value="mouse"/>
</dbReference>
<dbReference type="PRO" id="PR:Q9WTT4"/>
<dbReference type="Proteomes" id="UP000000589">
    <property type="component" value="Chromosome 17"/>
</dbReference>
<dbReference type="RNAct" id="Q9WTT4">
    <property type="molecule type" value="protein"/>
</dbReference>
<dbReference type="Bgee" id="ENSMUSG00000024403">
    <property type="expression patterns" value="Expressed in subiculum and 172 other cell types or tissues"/>
</dbReference>
<dbReference type="ExpressionAtlas" id="Q9WTT4">
    <property type="expression patterns" value="baseline and differential"/>
</dbReference>
<dbReference type="GO" id="GO:0030665">
    <property type="term" value="C:clathrin-coated vesicle membrane"/>
    <property type="evidence" value="ECO:0007669"/>
    <property type="project" value="UniProtKB-SubCell"/>
</dbReference>
<dbReference type="GO" id="GO:0098850">
    <property type="term" value="C:extrinsic component of synaptic vesicle membrane"/>
    <property type="evidence" value="ECO:0007669"/>
    <property type="project" value="Ensembl"/>
</dbReference>
<dbReference type="GO" id="GO:0042470">
    <property type="term" value="C:melanosome"/>
    <property type="evidence" value="ECO:0007669"/>
    <property type="project" value="UniProtKB-SubCell"/>
</dbReference>
<dbReference type="GO" id="GO:0030672">
    <property type="term" value="C:synaptic vesicle membrane"/>
    <property type="evidence" value="ECO:0000314"/>
    <property type="project" value="MGI"/>
</dbReference>
<dbReference type="GO" id="GO:0016471">
    <property type="term" value="C:vacuolar proton-transporting V-type ATPase complex"/>
    <property type="evidence" value="ECO:0000353"/>
    <property type="project" value="MGI"/>
</dbReference>
<dbReference type="GO" id="GO:0000221">
    <property type="term" value="C:vacuolar proton-transporting V-type ATPase, V1 domain"/>
    <property type="evidence" value="ECO:0000250"/>
    <property type="project" value="UniProtKB"/>
</dbReference>
<dbReference type="GO" id="GO:0016887">
    <property type="term" value="F:ATP hydrolysis activity"/>
    <property type="evidence" value="ECO:0000314"/>
    <property type="project" value="MGI"/>
</dbReference>
<dbReference type="GO" id="GO:0046961">
    <property type="term" value="F:proton-transporting ATPase activity, rotational mechanism"/>
    <property type="evidence" value="ECO:0000314"/>
    <property type="project" value="MGI"/>
</dbReference>
<dbReference type="GO" id="GO:0097401">
    <property type="term" value="P:synaptic vesicle lumen acidification"/>
    <property type="evidence" value="ECO:0000314"/>
    <property type="project" value="SynGO"/>
</dbReference>
<dbReference type="FunFam" id="1.20.5.2950:FF:000001">
    <property type="entry name" value="V-type proton ATPase subunit G"/>
    <property type="match status" value="1"/>
</dbReference>
<dbReference type="FunFam" id="1.20.5.620:FF:000004">
    <property type="entry name" value="V-type proton ATPase subunit G"/>
    <property type="match status" value="1"/>
</dbReference>
<dbReference type="Gene3D" id="1.20.5.2950">
    <property type="match status" value="1"/>
</dbReference>
<dbReference type="InterPro" id="IPR005124">
    <property type="entry name" value="V-ATPase_G"/>
</dbReference>
<dbReference type="NCBIfam" id="TIGR01147">
    <property type="entry name" value="V_ATP_synt_G"/>
    <property type="match status" value="1"/>
</dbReference>
<dbReference type="PANTHER" id="PTHR12713:SF13">
    <property type="entry name" value="V-TYPE PROTON ATPASE SUBUNIT G 2"/>
    <property type="match status" value="1"/>
</dbReference>
<dbReference type="PANTHER" id="PTHR12713">
    <property type="entry name" value="VACUOLAR ATP SYNTHASE SUBUNIT G"/>
    <property type="match status" value="1"/>
</dbReference>
<dbReference type="Pfam" id="PF03179">
    <property type="entry name" value="V-ATPase_G"/>
    <property type="match status" value="1"/>
</dbReference>
<name>VATG2_MOUSE</name>
<comment type="function">
    <text evidence="1">Subunit of the V1 complex of vacuolar(H+)-ATPase (V-ATPase), a multisubunit enzyme composed of a peripheral complex (V1) that hydrolyzes ATP and a membrane integral complex (V0) that translocates protons. V-ATPase is responsible for acidifying and maintaining the pH of intracellular compartments and in some cell types, is targeted to the plasma membrane, where it is responsible for acidifying the extracellular environment.</text>
</comment>
<comment type="subunit">
    <text evidence="1">V-ATPase is a heteromultimeric enzyme made up of two complexes: the ATP-hydrolytic V1 complex and the proton translocation V0 complex. The V1 complex consists of three catalytic AB heterodimers that form a heterohexamer, three peripheral stalks each consisting of EG heterodimers, one central rotor including subunits D and F, and the regulatory subunits C and H. The proton translocation complex V0 consists of the proton transport subunit a, a ring of proteolipid subunits c9c'', rotary subunit d, subunits e and f, and the accessory subunits ATP6AP1/Ac45 and ATP6AP2/PRR.</text>
</comment>
<comment type="subcellular location">
    <subcellularLocation>
        <location evidence="2">Melanosome</location>
    </subcellularLocation>
    <subcellularLocation>
        <location evidence="3">Cytoplasmic vesicle</location>
        <location evidence="3">Clathrin-coated vesicle membrane</location>
        <topology evidence="5">Peripheral membrane protein</topology>
    </subcellularLocation>
    <text evidence="2">Highly enriched in late-stage melanosomes.</text>
</comment>
<comment type="similarity">
    <text evidence="5">Belongs to the V-ATPase G subunit family.</text>
</comment>
<reference key="1">
    <citation type="journal article" date="2003" name="Genome Res.">
        <title>Analysis of the gene-dense major histocompatibility complex class III region and its comparison to mouse.</title>
        <authorList>
            <person name="Xie T."/>
            <person name="Rowen L."/>
            <person name="Aguado B."/>
            <person name="Ahearn M.E."/>
            <person name="Madan A."/>
            <person name="Qin S."/>
            <person name="Campbell R.D."/>
            <person name="Hood L."/>
        </authorList>
    </citation>
    <scope>NUCLEOTIDE SEQUENCE [LARGE SCALE GENOMIC DNA]</scope>
    <source>
        <strain>129</strain>
    </source>
</reference>
<reference key="2">
    <citation type="journal article" date="2005" name="Science">
        <title>The transcriptional landscape of the mammalian genome.</title>
        <authorList>
            <person name="Carninci P."/>
            <person name="Kasukawa T."/>
            <person name="Katayama S."/>
            <person name="Gough J."/>
            <person name="Frith M.C."/>
            <person name="Maeda N."/>
            <person name="Oyama R."/>
            <person name="Ravasi T."/>
            <person name="Lenhard B."/>
            <person name="Wells C."/>
            <person name="Kodzius R."/>
            <person name="Shimokawa K."/>
            <person name="Bajic V.B."/>
            <person name="Brenner S.E."/>
            <person name="Batalov S."/>
            <person name="Forrest A.R."/>
            <person name="Zavolan M."/>
            <person name="Davis M.J."/>
            <person name="Wilming L.G."/>
            <person name="Aidinis V."/>
            <person name="Allen J.E."/>
            <person name="Ambesi-Impiombato A."/>
            <person name="Apweiler R."/>
            <person name="Aturaliya R.N."/>
            <person name="Bailey T.L."/>
            <person name="Bansal M."/>
            <person name="Baxter L."/>
            <person name="Beisel K.W."/>
            <person name="Bersano T."/>
            <person name="Bono H."/>
            <person name="Chalk A.M."/>
            <person name="Chiu K.P."/>
            <person name="Choudhary V."/>
            <person name="Christoffels A."/>
            <person name="Clutterbuck D.R."/>
            <person name="Crowe M.L."/>
            <person name="Dalla E."/>
            <person name="Dalrymple B.P."/>
            <person name="de Bono B."/>
            <person name="Della Gatta G."/>
            <person name="di Bernardo D."/>
            <person name="Down T."/>
            <person name="Engstrom P."/>
            <person name="Fagiolini M."/>
            <person name="Faulkner G."/>
            <person name="Fletcher C.F."/>
            <person name="Fukushima T."/>
            <person name="Furuno M."/>
            <person name="Futaki S."/>
            <person name="Gariboldi M."/>
            <person name="Georgii-Hemming P."/>
            <person name="Gingeras T.R."/>
            <person name="Gojobori T."/>
            <person name="Green R.E."/>
            <person name="Gustincich S."/>
            <person name="Harbers M."/>
            <person name="Hayashi Y."/>
            <person name="Hensch T.K."/>
            <person name="Hirokawa N."/>
            <person name="Hill D."/>
            <person name="Huminiecki L."/>
            <person name="Iacono M."/>
            <person name="Ikeo K."/>
            <person name="Iwama A."/>
            <person name="Ishikawa T."/>
            <person name="Jakt M."/>
            <person name="Kanapin A."/>
            <person name="Katoh M."/>
            <person name="Kawasawa Y."/>
            <person name="Kelso J."/>
            <person name="Kitamura H."/>
            <person name="Kitano H."/>
            <person name="Kollias G."/>
            <person name="Krishnan S.P."/>
            <person name="Kruger A."/>
            <person name="Kummerfeld S.K."/>
            <person name="Kurochkin I.V."/>
            <person name="Lareau L.F."/>
            <person name="Lazarevic D."/>
            <person name="Lipovich L."/>
            <person name="Liu J."/>
            <person name="Liuni S."/>
            <person name="McWilliam S."/>
            <person name="Madan Babu M."/>
            <person name="Madera M."/>
            <person name="Marchionni L."/>
            <person name="Matsuda H."/>
            <person name="Matsuzawa S."/>
            <person name="Miki H."/>
            <person name="Mignone F."/>
            <person name="Miyake S."/>
            <person name="Morris K."/>
            <person name="Mottagui-Tabar S."/>
            <person name="Mulder N."/>
            <person name="Nakano N."/>
            <person name="Nakauchi H."/>
            <person name="Ng P."/>
            <person name="Nilsson R."/>
            <person name="Nishiguchi S."/>
            <person name="Nishikawa S."/>
            <person name="Nori F."/>
            <person name="Ohara O."/>
            <person name="Okazaki Y."/>
            <person name="Orlando V."/>
            <person name="Pang K.C."/>
            <person name="Pavan W.J."/>
            <person name="Pavesi G."/>
            <person name="Pesole G."/>
            <person name="Petrovsky N."/>
            <person name="Piazza S."/>
            <person name="Reed J."/>
            <person name="Reid J.F."/>
            <person name="Ring B.Z."/>
            <person name="Ringwald M."/>
            <person name="Rost B."/>
            <person name="Ruan Y."/>
            <person name="Salzberg S.L."/>
            <person name="Sandelin A."/>
            <person name="Schneider C."/>
            <person name="Schoenbach C."/>
            <person name="Sekiguchi K."/>
            <person name="Semple C.A."/>
            <person name="Seno S."/>
            <person name="Sessa L."/>
            <person name="Sheng Y."/>
            <person name="Shibata Y."/>
            <person name="Shimada H."/>
            <person name="Shimada K."/>
            <person name="Silva D."/>
            <person name="Sinclair B."/>
            <person name="Sperling S."/>
            <person name="Stupka E."/>
            <person name="Sugiura K."/>
            <person name="Sultana R."/>
            <person name="Takenaka Y."/>
            <person name="Taki K."/>
            <person name="Tammoja K."/>
            <person name="Tan S.L."/>
            <person name="Tang S."/>
            <person name="Taylor M.S."/>
            <person name="Tegner J."/>
            <person name="Teichmann S.A."/>
            <person name="Ueda H.R."/>
            <person name="van Nimwegen E."/>
            <person name="Verardo R."/>
            <person name="Wei C.L."/>
            <person name="Yagi K."/>
            <person name="Yamanishi H."/>
            <person name="Zabarovsky E."/>
            <person name="Zhu S."/>
            <person name="Zimmer A."/>
            <person name="Hide W."/>
            <person name="Bult C."/>
            <person name="Grimmond S.M."/>
            <person name="Teasdale R.D."/>
            <person name="Liu E.T."/>
            <person name="Brusic V."/>
            <person name="Quackenbush J."/>
            <person name="Wahlestedt C."/>
            <person name="Mattick J.S."/>
            <person name="Hume D.A."/>
            <person name="Kai C."/>
            <person name="Sasaki D."/>
            <person name="Tomaru Y."/>
            <person name="Fukuda S."/>
            <person name="Kanamori-Katayama M."/>
            <person name="Suzuki M."/>
            <person name="Aoki J."/>
            <person name="Arakawa T."/>
            <person name="Iida J."/>
            <person name="Imamura K."/>
            <person name="Itoh M."/>
            <person name="Kato T."/>
            <person name="Kawaji H."/>
            <person name="Kawagashira N."/>
            <person name="Kawashima T."/>
            <person name="Kojima M."/>
            <person name="Kondo S."/>
            <person name="Konno H."/>
            <person name="Nakano K."/>
            <person name="Ninomiya N."/>
            <person name="Nishio T."/>
            <person name="Okada M."/>
            <person name="Plessy C."/>
            <person name="Shibata K."/>
            <person name="Shiraki T."/>
            <person name="Suzuki S."/>
            <person name="Tagami M."/>
            <person name="Waki K."/>
            <person name="Watahiki A."/>
            <person name="Okamura-Oho Y."/>
            <person name="Suzuki H."/>
            <person name="Kawai J."/>
            <person name="Hayashizaki Y."/>
        </authorList>
    </citation>
    <scope>NUCLEOTIDE SEQUENCE [LARGE SCALE MRNA]</scope>
    <source>
        <strain>C57BL/6J</strain>
        <tissue>Embryo</tissue>
    </source>
</reference>
<reference key="3">
    <citation type="journal article" date="2004" name="Genome Res.">
        <title>The status, quality, and expansion of the NIH full-length cDNA project: the Mammalian Gene Collection (MGC).</title>
        <authorList>
            <consortium name="The MGC Project Team"/>
        </authorList>
    </citation>
    <scope>NUCLEOTIDE SEQUENCE [LARGE SCALE MRNA]</scope>
    <source>
        <tissue>Eye</tissue>
    </source>
</reference>
<reference key="4">
    <citation type="journal article" date="2010" name="Cell">
        <title>A tissue-specific atlas of mouse protein phosphorylation and expression.</title>
        <authorList>
            <person name="Huttlin E.L."/>
            <person name="Jedrychowski M.P."/>
            <person name="Elias J.E."/>
            <person name="Goswami T."/>
            <person name="Rad R."/>
            <person name="Beausoleil S.A."/>
            <person name="Villen J."/>
            <person name="Haas W."/>
            <person name="Sowa M.E."/>
            <person name="Gygi S.P."/>
        </authorList>
    </citation>
    <scope>IDENTIFICATION BY MASS SPECTROMETRY [LARGE SCALE ANALYSIS]</scope>
    <source>
        <tissue>Brain</tissue>
    </source>
</reference>